<gene>
    <name evidence="1" type="primary">rpoB</name>
    <name type="ordered locus">alr1594</name>
</gene>
<name>RPOB_NOSS1</name>
<protein>
    <recommendedName>
        <fullName evidence="1">DNA-directed RNA polymerase subunit beta</fullName>
        <shortName evidence="1">RNAP subunit beta</shortName>
        <ecNumber evidence="1">2.7.7.6</ecNumber>
    </recommendedName>
    <alternativeName>
        <fullName evidence="1">RNA polymerase subunit beta</fullName>
    </alternativeName>
    <alternativeName>
        <fullName evidence="1">Transcriptase subunit beta</fullName>
    </alternativeName>
</protein>
<accession>P22703</accession>
<dbReference type="EC" id="2.7.7.6" evidence="1"/>
<dbReference type="EMBL" id="BA000019">
    <property type="protein sequence ID" value="BAB77960.1"/>
    <property type="molecule type" value="Genomic_DNA"/>
</dbReference>
<dbReference type="EMBL" id="M60831">
    <property type="protein sequence ID" value="AAA22032.1"/>
    <property type="molecule type" value="Genomic_DNA"/>
</dbReference>
<dbReference type="PIR" id="A42361">
    <property type="entry name" value="A42361"/>
</dbReference>
<dbReference type="PIR" id="AD2005">
    <property type="entry name" value="AD2005"/>
</dbReference>
<dbReference type="PDB" id="8H3V">
    <property type="method" value="EM"/>
    <property type="resolution" value="4.50 A"/>
    <property type="chains" value="A=2-1131"/>
</dbReference>
<dbReference type="PDB" id="8H40">
    <property type="method" value="EM"/>
    <property type="resolution" value="3.60 A"/>
    <property type="chains" value="A=2-1131"/>
</dbReference>
<dbReference type="PDBsum" id="8H3V"/>
<dbReference type="PDBsum" id="8H40"/>
<dbReference type="EMDB" id="EMD-34475"/>
<dbReference type="EMDB" id="EMD-34476"/>
<dbReference type="SMR" id="P22703"/>
<dbReference type="STRING" id="103690.gene:10493610"/>
<dbReference type="KEGG" id="ana:alr1594"/>
<dbReference type="eggNOG" id="COG0085">
    <property type="taxonomic scope" value="Bacteria"/>
</dbReference>
<dbReference type="Proteomes" id="UP000002483">
    <property type="component" value="Chromosome"/>
</dbReference>
<dbReference type="GO" id="GO:0000428">
    <property type="term" value="C:DNA-directed RNA polymerase complex"/>
    <property type="evidence" value="ECO:0007669"/>
    <property type="project" value="UniProtKB-KW"/>
</dbReference>
<dbReference type="GO" id="GO:0003677">
    <property type="term" value="F:DNA binding"/>
    <property type="evidence" value="ECO:0007669"/>
    <property type="project" value="UniProtKB-UniRule"/>
</dbReference>
<dbReference type="GO" id="GO:0003899">
    <property type="term" value="F:DNA-directed RNA polymerase activity"/>
    <property type="evidence" value="ECO:0007669"/>
    <property type="project" value="UniProtKB-UniRule"/>
</dbReference>
<dbReference type="GO" id="GO:0032549">
    <property type="term" value="F:ribonucleoside binding"/>
    <property type="evidence" value="ECO:0007669"/>
    <property type="project" value="InterPro"/>
</dbReference>
<dbReference type="GO" id="GO:0006351">
    <property type="term" value="P:DNA-templated transcription"/>
    <property type="evidence" value="ECO:0007669"/>
    <property type="project" value="UniProtKB-UniRule"/>
</dbReference>
<dbReference type="CDD" id="cd00653">
    <property type="entry name" value="RNA_pol_B_RPB2"/>
    <property type="match status" value="1"/>
</dbReference>
<dbReference type="FunFam" id="3.90.1800.10:FF:000001">
    <property type="entry name" value="DNA-directed RNA polymerase subunit beta"/>
    <property type="match status" value="1"/>
</dbReference>
<dbReference type="Gene3D" id="2.40.50.100">
    <property type="match status" value="1"/>
</dbReference>
<dbReference type="Gene3D" id="2.40.50.150">
    <property type="match status" value="1"/>
</dbReference>
<dbReference type="Gene3D" id="3.90.1100.10">
    <property type="match status" value="1"/>
</dbReference>
<dbReference type="Gene3D" id="2.30.150.10">
    <property type="entry name" value="DNA-directed RNA polymerase, beta subunit, external 1 domain"/>
    <property type="match status" value="1"/>
</dbReference>
<dbReference type="Gene3D" id="2.40.270.10">
    <property type="entry name" value="DNA-directed RNA polymerase, subunit 2, domain 6"/>
    <property type="match status" value="1"/>
</dbReference>
<dbReference type="Gene3D" id="3.90.1800.10">
    <property type="entry name" value="RNA polymerase alpha subunit dimerisation domain"/>
    <property type="match status" value="1"/>
</dbReference>
<dbReference type="Gene3D" id="3.90.1110.10">
    <property type="entry name" value="RNA polymerase Rpb2, domain 2"/>
    <property type="match status" value="1"/>
</dbReference>
<dbReference type="HAMAP" id="MF_01321">
    <property type="entry name" value="RNApol_bact_RpoB"/>
    <property type="match status" value="1"/>
</dbReference>
<dbReference type="InterPro" id="IPR042107">
    <property type="entry name" value="DNA-dir_RNA_pol_bsu_ext_1_sf"/>
</dbReference>
<dbReference type="InterPro" id="IPR019462">
    <property type="entry name" value="DNA-dir_RNA_pol_bsu_external_1"/>
</dbReference>
<dbReference type="InterPro" id="IPR015712">
    <property type="entry name" value="DNA-dir_RNA_pol_su2"/>
</dbReference>
<dbReference type="InterPro" id="IPR007120">
    <property type="entry name" value="DNA-dir_RNAP_su2_dom"/>
</dbReference>
<dbReference type="InterPro" id="IPR037033">
    <property type="entry name" value="DNA-dir_RNAP_su2_hyb_sf"/>
</dbReference>
<dbReference type="InterPro" id="IPR010243">
    <property type="entry name" value="RNA_pol_bsu_bac"/>
</dbReference>
<dbReference type="InterPro" id="IPR007121">
    <property type="entry name" value="RNA_pol_bsu_CS"/>
</dbReference>
<dbReference type="InterPro" id="IPR007644">
    <property type="entry name" value="RNA_pol_bsu_protrusion"/>
</dbReference>
<dbReference type="InterPro" id="IPR007642">
    <property type="entry name" value="RNA_pol_Rpb2_2"/>
</dbReference>
<dbReference type="InterPro" id="IPR037034">
    <property type="entry name" value="RNA_pol_Rpb2_2_sf"/>
</dbReference>
<dbReference type="InterPro" id="IPR007645">
    <property type="entry name" value="RNA_pol_Rpb2_3"/>
</dbReference>
<dbReference type="InterPro" id="IPR007641">
    <property type="entry name" value="RNA_pol_Rpb2_7"/>
</dbReference>
<dbReference type="InterPro" id="IPR014724">
    <property type="entry name" value="RNA_pol_RPB2_OB-fold"/>
</dbReference>
<dbReference type="NCBIfam" id="NF001616">
    <property type="entry name" value="PRK00405.1"/>
    <property type="match status" value="1"/>
</dbReference>
<dbReference type="NCBIfam" id="TIGR02013">
    <property type="entry name" value="rpoB"/>
    <property type="match status" value="1"/>
</dbReference>
<dbReference type="PANTHER" id="PTHR20856">
    <property type="entry name" value="DNA-DIRECTED RNA POLYMERASE I SUBUNIT 2"/>
    <property type="match status" value="1"/>
</dbReference>
<dbReference type="Pfam" id="PF04563">
    <property type="entry name" value="RNA_pol_Rpb2_1"/>
    <property type="match status" value="1"/>
</dbReference>
<dbReference type="Pfam" id="PF04561">
    <property type="entry name" value="RNA_pol_Rpb2_2"/>
    <property type="match status" value="1"/>
</dbReference>
<dbReference type="Pfam" id="PF04565">
    <property type="entry name" value="RNA_pol_Rpb2_3"/>
    <property type="match status" value="1"/>
</dbReference>
<dbReference type="Pfam" id="PF10385">
    <property type="entry name" value="RNA_pol_Rpb2_45"/>
    <property type="match status" value="1"/>
</dbReference>
<dbReference type="Pfam" id="PF00562">
    <property type="entry name" value="RNA_pol_Rpb2_6"/>
    <property type="match status" value="1"/>
</dbReference>
<dbReference type="Pfam" id="PF04560">
    <property type="entry name" value="RNA_pol_Rpb2_7"/>
    <property type="match status" value="1"/>
</dbReference>
<dbReference type="SUPFAM" id="SSF64484">
    <property type="entry name" value="beta and beta-prime subunits of DNA dependent RNA-polymerase"/>
    <property type="match status" value="1"/>
</dbReference>
<dbReference type="PROSITE" id="PS01166">
    <property type="entry name" value="RNA_POL_BETA"/>
    <property type="match status" value="1"/>
</dbReference>
<reference key="1">
    <citation type="journal article" date="2001" name="DNA Res.">
        <title>Complete genomic sequence of the filamentous nitrogen-fixing cyanobacterium Anabaena sp. strain PCC 7120.</title>
        <authorList>
            <person name="Kaneko T."/>
            <person name="Nakamura Y."/>
            <person name="Wolk C.P."/>
            <person name="Kuritz T."/>
            <person name="Sasamoto S."/>
            <person name="Watanabe A."/>
            <person name="Iriguchi M."/>
            <person name="Ishikawa A."/>
            <person name="Kawashima K."/>
            <person name="Kimura T."/>
            <person name="Kishida Y."/>
            <person name="Kohara M."/>
            <person name="Matsumoto M."/>
            <person name="Matsuno A."/>
            <person name="Muraki A."/>
            <person name="Nakazaki N."/>
            <person name="Shimpo S."/>
            <person name="Sugimoto M."/>
            <person name="Takazawa M."/>
            <person name="Yamada M."/>
            <person name="Yasuda M."/>
            <person name="Tabata S."/>
        </authorList>
    </citation>
    <scope>NUCLEOTIDE SEQUENCE [LARGE SCALE GENOMIC DNA]</scope>
    <source>
        <strain>PCC 7120 / SAG 25.82 / UTEX 2576</strain>
    </source>
</reference>
<reference key="2">
    <citation type="journal article" date="1991" name="J. Bacteriol.">
        <title>Evolutionary relationships among eubacteria, cyanobacteria, and chloroplasts: evidence from the rpoC1 gene of Anabaena sp. strain PCC 7120.</title>
        <authorList>
            <person name="Bergsland K.J."/>
            <person name="Haselkorn R."/>
        </authorList>
    </citation>
    <scope>NUCLEOTIDE SEQUENCE [GENOMIC DNA] OF 967-1131</scope>
</reference>
<sequence>MSSKKFNQVDKGRGMISENYIEPAFLLPDLIEIQRSSFRWFLEEGLIEELNSFSPITDYTGKLELHFLGHNYKLKEPKYSVEEAKRRDSTYAVQMYVPTRLLNKETGDIKEQEVFIGDLPLMTDRGTFIINGAERVIVNQIVRSPGVYYKSEIDKNGRRTYSASLIPNRGAWLKFETDRNDLVWVRIDKTRKLSAQVLLKALGLSDNEIFDALRHPEYFQKTIEKEGQFSEEEALMELYRKLRPGEPPTVLGGQQLLDSRFFDPKRYDLGRVGRYKLNKKLRLSVPDTVRVLTSGDILAAVDYLINLEYDIGSIDDIDHLGNRRVRSVGELLQNQVRVGLNRLERIIRERMTVSDAEVLTPASLVNPKPLVAAIKEFFGSSQLSQFMDQTNPLAELTHKRRLSALGPGGLTRERAGFAVRDIHPSHYGRICPIETPEGPNAGLIGSLATHARVNQYGFLETPFRPVENGRVRFDQPAAYMTADEEDDLRVAPGDIPVDENGYIIGPQVPVRYRQEFSTTTPEQVDYVAVSPVQIVSVATSMIPFLEHDDANRALMGSNMQRQAVPLLKPERPLVGTGLEAQGARDSGMVIVSRTDGDVVYVDATEIRVRVSGQLPTASGKSTDNGQLTSQKGQEIRYTVSKYQRSNQDTCLNQKPLVRIGERVVAGQVLADGSSTEGGELALGQNIVVAYMPWEGYNYEDAILISERLVQDDIYTSIHIEKYEIEARQTKLGPEEITREIPNVGEDALRQLDEQGIIRIGAWVEAGDILVGKVTPKGESDQPPEEKLLRAIFGEKARDVRDNSLRVPNGEKGRVVDVRLFTREQGDELPPGANMVVRVYVAQKRKIQVGDKMAGRHGNKGIISRILPIEDMPYLPDGSPVDIVLNPLGVPSRMNVGQVFECLLGWAGHTLGVRFKITPFDEMYGEESSRRIVHGKLQEARDETGKDWVYNPDDPGKIMVYDGRTGEAFDRPVTIGVAYMLKLVHLVDDKIHARSTGPYSLVTQQPLGGKAQQGGQRFGEMEVWALEAFGAAYTLQELLTVKSDDMQGRNEALNAIVKGKAIPRPGTPESFKVLMRELQSLGLDIAVHKVETQADGSSLDVEVDLMADQLARRTPPRPTYESLSRESLDDDE</sequence>
<organism>
    <name type="scientific">Nostoc sp. (strain PCC 7120 / SAG 25.82 / UTEX 2576)</name>
    <dbReference type="NCBI Taxonomy" id="103690"/>
    <lineage>
        <taxon>Bacteria</taxon>
        <taxon>Bacillati</taxon>
        <taxon>Cyanobacteriota</taxon>
        <taxon>Cyanophyceae</taxon>
        <taxon>Nostocales</taxon>
        <taxon>Nostocaceae</taxon>
        <taxon>Nostoc</taxon>
    </lineage>
</organism>
<proteinExistence type="evidence at protein level"/>
<comment type="function">
    <text evidence="1">DNA-dependent RNA polymerase catalyzes the transcription of DNA into RNA using the four ribonucleoside triphosphates as substrates.</text>
</comment>
<comment type="catalytic activity">
    <reaction evidence="1">
        <text>RNA(n) + a ribonucleoside 5'-triphosphate = RNA(n+1) + diphosphate</text>
        <dbReference type="Rhea" id="RHEA:21248"/>
        <dbReference type="Rhea" id="RHEA-COMP:14527"/>
        <dbReference type="Rhea" id="RHEA-COMP:17342"/>
        <dbReference type="ChEBI" id="CHEBI:33019"/>
        <dbReference type="ChEBI" id="CHEBI:61557"/>
        <dbReference type="ChEBI" id="CHEBI:140395"/>
        <dbReference type="EC" id="2.7.7.6"/>
    </reaction>
</comment>
<comment type="subunit">
    <text evidence="1">In cyanobacteria the RNAP catalytic core is composed of 2 alpha, 1 beta, 1 beta', 1 gamma and 1 omega subunit. When a sigma factor is associated with the core the holoenzyme is formed, which can initiate transcription.</text>
</comment>
<comment type="similarity">
    <text evidence="1">Belongs to the RNA polymerase beta chain family.</text>
</comment>
<evidence type="ECO:0000255" key="1">
    <source>
        <dbReference type="HAMAP-Rule" id="MF_01321"/>
    </source>
</evidence>
<evidence type="ECO:0000256" key="2">
    <source>
        <dbReference type="SAM" id="MobiDB-lite"/>
    </source>
</evidence>
<feature type="chain" id="PRO_0000047854" description="DNA-directed RNA polymerase subunit beta">
    <location>
        <begin position="1"/>
        <end position="1131"/>
    </location>
</feature>
<feature type="region of interest" description="Disordered" evidence="2">
    <location>
        <begin position="1108"/>
        <end position="1131"/>
    </location>
</feature>
<feature type="compositionally biased region" description="Basic and acidic residues" evidence="2">
    <location>
        <begin position="1122"/>
        <end position="1131"/>
    </location>
</feature>
<keyword id="KW-0002">3D-structure</keyword>
<keyword id="KW-0240">DNA-directed RNA polymerase</keyword>
<keyword id="KW-0548">Nucleotidyltransferase</keyword>
<keyword id="KW-1185">Reference proteome</keyword>
<keyword id="KW-0804">Transcription</keyword>
<keyword id="KW-0808">Transferase</keyword>